<sequence length="178" mass="19905">MILSDKTILKMLAEKTLIIEPLEKEQIQPASVDIRLGNTFSIVEDSCTGIINLEKEVKYKTITSDTYILLPNQFVLATTMEYFELPNNLTAFVEGRSSLGRLGLFIQNAGWVDPGFKGEITLELFNANRCAIELKAGRRVGQLVFAKMDDTALNPYKGKYQGQKGATGSRVFLDYEVK</sequence>
<name>DCDB_ACET2</name>
<dbReference type="EC" id="3.5.4.30" evidence="1"/>
<dbReference type="EMBL" id="CP000568">
    <property type="protein sequence ID" value="ABN52706.1"/>
    <property type="molecule type" value="Genomic_DNA"/>
</dbReference>
<dbReference type="RefSeq" id="WP_011838092.1">
    <property type="nucleotide sequence ID" value="NC_009012.1"/>
</dbReference>
<dbReference type="SMR" id="A3DFH7"/>
<dbReference type="STRING" id="203119.Cthe_1477"/>
<dbReference type="GeneID" id="35805285"/>
<dbReference type="KEGG" id="cth:Cthe_1477"/>
<dbReference type="eggNOG" id="COG0717">
    <property type="taxonomic scope" value="Bacteria"/>
</dbReference>
<dbReference type="HOGENOM" id="CLU_087476_2_1_9"/>
<dbReference type="OrthoDB" id="9780202at2"/>
<dbReference type="UniPathway" id="UPA00610">
    <property type="reaction ID" value="UER00667"/>
</dbReference>
<dbReference type="Proteomes" id="UP000002145">
    <property type="component" value="Chromosome"/>
</dbReference>
<dbReference type="GO" id="GO:0033973">
    <property type="term" value="F:dCTP deaminase (dUMP-forming) activity"/>
    <property type="evidence" value="ECO:0007669"/>
    <property type="project" value="UniProtKB-UniRule"/>
</dbReference>
<dbReference type="GO" id="GO:0008829">
    <property type="term" value="F:dCTP deaminase activity"/>
    <property type="evidence" value="ECO:0007669"/>
    <property type="project" value="InterPro"/>
</dbReference>
<dbReference type="GO" id="GO:0000166">
    <property type="term" value="F:nucleotide binding"/>
    <property type="evidence" value="ECO:0007669"/>
    <property type="project" value="UniProtKB-KW"/>
</dbReference>
<dbReference type="GO" id="GO:0006226">
    <property type="term" value="P:dUMP biosynthetic process"/>
    <property type="evidence" value="ECO:0007669"/>
    <property type="project" value="UniProtKB-UniRule"/>
</dbReference>
<dbReference type="GO" id="GO:0006229">
    <property type="term" value="P:dUTP biosynthetic process"/>
    <property type="evidence" value="ECO:0007669"/>
    <property type="project" value="InterPro"/>
</dbReference>
<dbReference type="CDD" id="cd07557">
    <property type="entry name" value="trimeric_dUTPase"/>
    <property type="match status" value="1"/>
</dbReference>
<dbReference type="Gene3D" id="2.70.40.10">
    <property type="match status" value="1"/>
</dbReference>
<dbReference type="HAMAP" id="MF_00146">
    <property type="entry name" value="dCTP_deaminase"/>
    <property type="match status" value="1"/>
</dbReference>
<dbReference type="InterPro" id="IPR011962">
    <property type="entry name" value="dCTP_deaminase"/>
</dbReference>
<dbReference type="InterPro" id="IPR036157">
    <property type="entry name" value="dUTPase-like_sf"/>
</dbReference>
<dbReference type="InterPro" id="IPR033704">
    <property type="entry name" value="dUTPase_trimeric"/>
</dbReference>
<dbReference type="NCBIfam" id="TIGR02274">
    <property type="entry name" value="dCTP_deam"/>
    <property type="match status" value="1"/>
</dbReference>
<dbReference type="PANTHER" id="PTHR42680">
    <property type="entry name" value="DCTP DEAMINASE"/>
    <property type="match status" value="1"/>
</dbReference>
<dbReference type="PANTHER" id="PTHR42680:SF3">
    <property type="entry name" value="DCTP DEAMINASE"/>
    <property type="match status" value="1"/>
</dbReference>
<dbReference type="Pfam" id="PF22769">
    <property type="entry name" value="DCD"/>
    <property type="match status" value="1"/>
</dbReference>
<dbReference type="SUPFAM" id="SSF51283">
    <property type="entry name" value="dUTPase-like"/>
    <property type="match status" value="1"/>
</dbReference>
<gene>
    <name evidence="1" type="primary">dcd</name>
    <name type="ordered locus">Cthe_1477</name>
</gene>
<feature type="chain" id="PRO_1000009709" description="dCTP deaminase, dUMP-forming">
    <location>
        <begin position="1"/>
        <end position="178"/>
    </location>
</feature>
<feature type="active site" description="Proton donor/acceptor" evidence="1">
    <location>
        <position position="123"/>
    </location>
</feature>
<feature type="binding site" evidence="1">
    <location>
        <begin position="96"/>
        <end position="101"/>
    </location>
    <ligand>
        <name>dCTP</name>
        <dbReference type="ChEBI" id="CHEBI:61481"/>
    </ligand>
</feature>
<feature type="binding site" evidence="1">
    <location>
        <position position="113"/>
    </location>
    <ligand>
        <name>dCTP</name>
        <dbReference type="ChEBI" id="CHEBI:61481"/>
    </ligand>
</feature>
<feature type="binding site" evidence="1">
    <location>
        <begin position="121"/>
        <end position="123"/>
    </location>
    <ligand>
        <name>dCTP</name>
        <dbReference type="ChEBI" id="CHEBI:61481"/>
    </ligand>
</feature>
<feature type="binding site" evidence="1">
    <location>
        <position position="142"/>
    </location>
    <ligand>
        <name>dCTP</name>
        <dbReference type="ChEBI" id="CHEBI:61481"/>
    </ligand>
</feature>
<feature type="binding site" evidence="1">
    <location>
        <position position="156"/>
    </location>
    <ligand>
        <name>dCTP</name>
        <dbReference type="ChEBI" id="CHEBI:61481"/>
    </ligand>
</feature>
<feature type="binding site" evidence="1">
    <location>
        <position position="163"/>
    </location>
    <ligand>
        <name>dCTP</name>
        <dbReference type="ChEBI" id="CHEBI:61481"/>
    </ligand>
</feature>
<feature type="site" description="Important for bifunctional activity" evidence="1">
    <location>
        <begin position="110"/>
        <end position="111"/>
    </location>
</feature>
<proteinExistence type="inferred from homology"/>
<organism>
    <name type="scientific">Acetivibrio thermocellus (strain ATCC 27405 / DSM 1237 / JCM 9322 / NBRC 103400 / NCIMB 10682 / NRRL B-4536 / VPI 7372)</name>
    <name type="common">Clostridium thermocellum</name>
    <dbReference type="NCBI Taxonomy" id="203119"/>
    <lineage>
        <taxon>Bacteria</taxon>
        <taxon>Bacillati</taxon>
        <taxon>Bacillota</taxon>
        <taxon>Clostridia</taxon>
        <taxon>Eubacteriales</taxon>
        <taxon>Oscillospiraceae</taxon>
        <taxon>Acetivibrio</taxon>
    </lineage>
</organism>
<comment type="function">
    <text evidence="1">Bifunctional enzyme that catalyzes both the deamination of dCTP to dUTP and the hydrolysis of dUTP to dUMP without releasing the toxic dUTP intermediate.</text>
</comment>
<comment type="catalytic activity">
    <reaction evidence="1">
        <text>dCTP + 2 H2O = dUMP + NH4(+) + diphosphate</text>
        <dbReference type="Rhea" id="RHEA:19205"/>
        <dbReference type="ChEBI" id="CHEBI:15377"/>
        <dbReference type="ChEBI" id="CHEBI:28938"/>
        <dbReference type="ChEBI" id="CHEBI:33019"/>
        <dbReference type="ChEBI" id="CHEBI:61481"/>
        <dbReference type="ChEBI" id="CHEBI:246422"/>
        <dbReference type="EC" id="3.5.4.30"/>
    </reaction>
</comment>
<comment type="pathway">
    <text evidence="1">Pyrimidine metabolism; dUMP biosynthesis; dUMP from dCTP: step 1/1.</text>
</comment>
<comment type="subunit">
    <text evidence="1">Homotrimer.</text>
</comment>
<comment type="similarity">
    <text evidence="1">Belongs to the dCTP deaminase family.</text>
</comment>
<accession>A3DFH7</accession>
<reference key="1">
    <citation type="submission" date="2007-02" db="EMBL/GenBank/DDBJ databases">
        <title>Complete sequence of Clostridium thermocellum ATCC 27405.</title>
        <authorList>
            <consortium name="US DOE Joint Genome Institute"/>
            <person name="Copeland A."/>
            <person name="Lucas S."/>
            <person name="Lapidus A."/>
            <person name="Barry K."/>
            <person name="Detter J.C."/>
            <person name="Glavina del Rio T."/>
            <person name="Hammon N."/>
            <person name="Israni S."/>
            <person name="Dalin E."/>
            <person name="Tice H."/>
            <person name="Pitluck S."/>
            <person name="Chertkov O."/>
            <person name="Brettin T."/>
            <person name="Bruce D."/>
            <person name="Han C."/>
            <person name="Tapia R."/>
            <person name="Gilna P."/>
            <person name="Schmutz J."/>
            <person name="Larimer F."/>
            <person name="Land M."/>
            <person name="Hauser L."/>
            <person name="Kyrpides N."/>
            <person name="Mikhailova N."/>
            <person name="Wu J.H.D."/>
            <person name="Newcomb M."/>
            <person name="Richardson P."/>
        </authorList>
    </citation>
    <scope>NUCLEOTIDE SEQUENCE [LARGE SCALE GENOMIC DNA]</scope>
    <source>
        <strain>ATCC 27405 / DSM 1237 / JCM 9322 / NBRC 103400 / NCIMB 10682 / NRRL B-4536 / VPI 7372</strain>
    </source>
</reference>
<keyword id="KW-0378">Hydrolase</keyword>
<keyword id="KW-0546">Nucleotide metabolism</keyword>
<keyword id="KW-0547">Nucleotide-binding</keyword>
<keyword id="KW-1185">Reference proteome</keyword>
<protein>
    <recommendedName>
        <fullName evidence="1">dCTP deaminase, dUMP-forming</fullName>
        <ecNumber evidence="1">3.5.4.30</ecNumber>
    </recommendedName>
    <alternativeName>
        <fullName evidence="1">Bifunctional dCTP deaminase:dUTPase</fullName>
    </alternativeName>
    <alternativeName>
        <fullName evidence="1">DCD-DUT</fullName>
    </alternativeName>
</protein>
<evidence type="ECO:0000255" key="1">
    <source>
        <dbReference type="HAMAP-Rule" id="MF_00146"/>
    </source>
</evidence>